<keyword id="KW-1185">Reference proteome</keyword>
<keyword id="KW-0687">Ribonucleoprotein</keyword>
<keyword id="KW-0689">Ribosomal protein</keyword>
<keyword id="KW-0694">RNA-binding</keyword>
<keyword id="KW-0699">rRNA-binding</keyword>
<protein>
    <recommendedName>
        <fullName evidence="1">Small ribosomal subunit protein uS5</fullName>
    </recommendedName>
    <alternativeName>
        <fullName evidence="3">30S ribosomal protein S5</fullName>
    </alternativeName>
</protein>
<accession>Q2NFX7</accession>
<reference key="1">
    <citation type="journal article" date="2006" name="J. Bacteriol.">
        <title>The genome sequence of Methanosphaera stadtmanae reveals why this human intestinal archaeon is restricted to methanol and H2 for methane formation and ATP synthesis.</title>
        <authorList>
            <person name="Fricke W.F."/>
            <person name="Seedorf H."/>
            <person name="Henne A."/>
            <person name="Kruer M."/>
            <person name="Liesegang H."/>
            <person name="Hedderich R."/>
            <person name="Gottschalk G."/>
            <person name="Thauer R.K."/>
        </authorList>
    </citation>
    <scope>NUCLEOTIDE SEQUENCE [LARGE SCALE GENOMIC DNA]</scope>
    <source>
        <strain>ATCC 43021 / DSM 3091 / JCM 11832 / MCB-3</strain>
    </source>
</reference>
<dbReference type="EMBL" id="CP000102">
    <property type="protein sequence ID" value="ABC57276.1"/>
    <property type="molecule type" value="Genomic_DNA"/>
</dbReference>
<dbReference type="RefSeq" id="WP_011406475.1">
    <property type="nucleotide sequence ID" value="NC_007681.1"/>
</dbReference>
<dbReference type="SMR" id="Q2NFX7"/>
<dbReference type="STRING" id="339860.Msp_0888"/>
<dbReference type="KEGG" id="mst:Msp_0888"/>
<dbReference type="eggNOG" id="arCOG04087">
    <property type="taxonomic scope" value="Archaea"/>
</dbReference>
<dbReference type="HOGENOM" id="CLU_065898_0_1_2"/>
<dbReference type="OrthoDB" id="38155at2157"/>
<dbReference type="Proteomes" id="UP000001931">
    <property type="component" value="Chromosome"/>
</dbReference>
<dbReference type="GO" id="GO:0022627">
    <property type="term" value="C:cytosolic small ribosomal subunit"/>
    <property type="evidence" value="ECO:0007669"/>
    <property type="project" value="TreeGrafter"/>
</dbReference>
<dbReference type="GO" id="GO:0019843">
    <property type="term" value="F:rRNA binding"/>
    <property type="evidence" value="ECO:0007669"/>
    <property type="project" value="UniProtKB-UniRule"/>
</dbReference>
<dbReference type="GO" id="GO:0003735">
    <property type="term" value="F:structural constituent of ribosome"/>
    <property type="evidence" value="ECO:0007669"/>
    <property type="project" value="InterPro"/>
</dbReference>
<dbReference type="GO" id="GO:0006412">
    <property type="term" value="P:translation"/>
    <property type="evidence" value="ECO:0007669"/>
    <property type="project" value="UniProtKB-UniRule"/>
</dbReference>
<dbReference type="FunFam" id="3.30.160.20:FF:000002">
    <property type="entry name" value="40S ribosomal protein S2"/>
    <property type="match status" value="1"/>
</dbReference>
<dbReference type="FunFam" id="3.30.230.10:FF:000004">
    <property type="entry name" value="40S ribosomal protein S2"/>
    <property type="match status" value="1"/>
</dbReference>
<dbReference type="Gene3D" id="3.30.160.20">
    <property type="match status" value="1"/>
</dbReference>
<dbReference type="Gene3D" id="3.30.230.10">
    <property type="match status" value="1"/>
</dbReference>
<dbReference type="HAMAP" id="MF_01307_A">
    <property type="entry name" value="Ribosomal_uS5_A"/>
    <property type="match status" value="1"/>
</dbReference>
<dbReference type="InterPro" id="IPR020568">
    <property type="entry name" value="Ribosomal_Su5_D2-typ_SF"/>
</dbReference>
<dbReference type="InterPro" id="IPR000851">
    <property type="entry name" value="Ribosomal_uS5"/>
</dbReference>
<dbReference type="InterPro" id="IPR047866">
    <property type="entry name" value="Ribosomal_uS5_arc"/>
</dbReference>
<dbReference type="InterPro" id="IPR005324">
    <property type="entry name" value="Ribosomal_uS5_C"/>
</dbReference>
<dbReference type="InterPro" id="IPR005711">
    <property type="entry name" value="Ribosomal_uS5_euk/arc"/>
</dbReference>
<dbReference type="InterPro" id="IPR013810">
    <property type="entry name" value="Ribosomal_uS5_N"/>
</dbReference>
<dbReference type="InterPro" id="IPR018192">
    <property type="entry name" value="Ribosomal_uS5_N_CS"/>
</dbReference>
<dbReference type="InterPro" id="IPR014721">
    <property type="entry name" value="Ribsml_uS5_D2-typ_fold_subgr"/>
</dbReference>
<dbReference type="NCBIfam" id="NF003125">
    <property type="entry name" value="PRK04044.1"/>
    <property type="match status" value="1"/>
</dbReference>
<dbReference type="NCBIfam" id="TIGR01020">
    <property type="entry name" value="uS5_euk_arch"/>
    <property type="match status" value="1"/>
</dbReference>
<dbReference type="PANTHER" id="PTHR13718:SF4">
    <property type="entry name" value="40S RIBOSOMAL PROTEIN S2"/>
    <property type="match status" value="1"/>
</dbReference>
<dbReference type="PANTHER" id="PTHR13718">
    <property type="entry name" value="RIBOSOMAL S SUBUNIT"/>
    <property type="match status" value="1"/>
</dbReference>
<dbReference type="Pfam" id="PF00333">
    <property type="entry name" value="Ribosomal_S5"/>
    <property type="match status" value="1"/>
</dbReference>
<dbReference type="Pfam" id="PF03719">
    <property type="entry name" value="Ribosomal_S5_C"/>
    <property type="match status" value="1"/>
</dbReference>
<dbReference type="SUPFAM" id="SSF54768">
    <property type="entry name" value="dsRNA-binding domain-like"/>
    <property type="match status" value="1"/>
</dbReference>
<dbReference type="SUPFAM" id="SSF54211">
    <property type="entry name" value="Ribosomal protein S5 domain 2-like"/>
    <property type="match status" value="1"/>
</dbReference>
<dbReference type="PROSITE" id="PS00585">
    <property type="entry name" value="RIBOSOMAL_S5"/>
    <property type="match status" value="1"/>
</dbReference>
<dbReference type="PROSITE" id="PS50881">
    <property type="entry name" value="S5_DSRBD"/>
    <property type="match status" value="1"/>
</dbReference>
<gene>
    <name evidence="1" type="primary">rps5</name>
    <name type="ordered locus">Msp_0888</name>
</gene>
<comment type="function">
    <text evidence="1">With S4 and S12 plays an important role in translational accuracy.</text>
</comment>
<comment type="subunit">
    <text evidence="1">Part of the 30S ribosomal subunit. Contacts protein S4.</text>
</comment>
<comment type="domain">
    <text>The N-terminal domain interacts with the head of the 30S subunit; the C-terminal domain interacts with the body and contacts protein S4. The interaction surface between S4 and S5 is involved in control of translational fidelity.</text>
</comment>
<comment type="similarity">
    <text evidence="1">Belongs to the universal ribosomal protein uS5 family.</text>
</comment>
<feature type="chain" id="PRO_0000293212" description="Small ribosomal subunit protein uS5">
    <location>
        <begin position="1"/>
        <end position="227"/>
    </location>
</feature>
<feature type="domain" description="S5 DRBM" evidence="1">
    <location>
        <begin position="63"/>
        <end position="126"/>
    </location>
</feature>
<feature type="region of interest" description="Disordered" evidence="2">
    <location>
        <begin position="1"/>
        <end position="22"/>
    </location>
</feature>
<feature type="compositionally biased region" description="Low complexity" evidence="2">
    <location>
        <begin position="7"/>
        <end position="18"/>
    </location>
</feature>
<sequence length="227" mass="24536">MSKRSNRSNNKNNTNKFNIENWEPKTELGRKVKDGEITDIDQILDKGLPIMELEIVDALLPDLEEEVMDVNLVQRMHKSGRKVNFRVIVAVGNRNGYVGLGQGKSQEVGPAIRKAVDAAKYNLIKVRRGCGDWGCGCGRRHTVPFKIEGKMSSVSATLIPAPAGVGLAIGNVGKTILSLAGIADVWSMCSGQTQTTINFAGAVFDALKQLSSVKSSEKDLKALGVID</sequence>
<name>RS5_METST</name>
<organism>
    <name type="scientific">Methanosphaera stadtmanae (strain ATCC 43021 / DSM 3091 / JCM 11832 / MCB-3)</name>
    <dbReference type="NCBI Taxonomy" id="339860"/>
    <lineage>
        <taxon>Archaea</taxon>
        <taxon>Methanobacteriati</taxon>
        <taxon>Methanobacteriota</taxon>
        <taxon>Methanomada group</taxon>
        <taxon>Methanobacteria</taxon>
        <taxon>Methanobacteriales</taxon>
        <taxon>Methanobacteriaceae</taxon>
        <taxon>Methanosphaera</taxon>
    </lineage>
</organism>
<evidence type="ECO:0000255" key="1">
    <source>
        <dbReference type="HAMAP-Rule" id="MF_01307"/>
    </source>
</evidence>
<evidence type="ECO:0000256" key="2">
    <source>
        <dbReference type="SAM" id="MobiDB-lite"/>
    </source>
</evidence>
<evidence type="ECO:0000305" key="3"/>
<proteinExistence type="inferred from homology"/>